<keyword id="KW-0663">Pyridoxal phosphate</keyword>
<keyword id="KW-0808">Transferase</keyword>
<dbReference type="EC" id="2.5.1.140" evidence="1"/>
<dbReference type="EMBL" id="BA000017">
    <property type="protein sequence ID" value="BAB56278.1"/>
    <property type="molecule type" value="Genomic_DNA"/>
</dbReference>
<dbReference type="RefSeq" id="WP_000570808.1">
    <property type="nucleotide sequence ID" value="NC_002758.2"/>
</dbReference>
<dbReference type="SMR" id="Q932K9"/>
<dbReference type="KEGG" id="sav:SAV0116"/>
<dbReference type="HOGENOM" id="CLU_021018_1_0_9"/>
<dbReference type="PhylomeDB" id="Q932K9"/>
<dbReference type="Proteomes" id="UP000002481">
    <property type="component" value="Chromosome"/>
</dbReference>
<dbReference type="GO" id="GO:0016765">
    <property type="term" value="F:transferase activity, transferring alkyl or aryl (other than methyl) groups"/>
    <property type="evidence" value="ECO:0007669"/>
    <property type="project" value="UniProtKB-ARBA"/>
</dbReference>
<dbReference type="GO" id="GO:0006535">
    <property type="term" value="P:cysteine biosynthetic process from serine"/>
    <property type="evidence" value="ECO:0007669"/>
    <property type="project" value="InterPro"/>
</dbReference>
<dbReference type="CDD" id="cd01561">
    <property type="entry name" value="CBS_like"/>
    <property type="match status" value="1"/>
</dbReference>
<dbReference type="Gene3D" id="3.40.50.1100">
    <property type="match status" value="2"/>
</dbReference>
<dbReference type="InterPro" id="IPR050214">
    <property type="entry name" value="Cys_Synth/Cystath_Beta-Synth"/>
</dbReference>
<dbReference type="InterPro" id="IPR001216">
    <property type="entry name" value="P-phosphate_BS"/>
</dbReference>
<dbReference type="InterPro" id="IPR023927">
    <property type="entry name" value="SbnA"/>
</dbReference>
<dbReference type="InterPro" id="IPR001926">
    <property type="entry name" value="TrpB-like_PALP"/>
</dbReference>
<dbReference type="InterPro" id="IPR036052">
    <property type="entry name" value="TrpB-like_PALP_sf"/>
</dbReference>
<dbReference type="NCBIfam" id="TIGR03945">
    <property type="entry name" value="PLP_SbnA_fam"/>
    <property type="match status" value="1"/>
</dbReference>
<dbReference type="PANTHER" id="PTHR10314">
    <property type="entry name" value="CYSTATHIONINE BETA-SYNTHASE"/>
    <property type="match status" value="1"/>
</dbReference>
<dbReference type="Pfam" id="PF00291">
    <property type="entry name" value="PALP"/>
    <property type="match status" value="1"/>
</dbReference>
<dbReference type="SUPFAM" id="SSF53686">
    <property type="entry name" value="Tryptophan synthase beta subunit-like PLP-dependent enzymes"/>
    <property type="match status" value="1"/>
</dbReference>
<dbReference type="PROSITE" id="PS00901">
    <property type="entry name" value="CYS_SYNTHASE"/>
    <property type="match status" value="1"/>
</dbReference>
<accession>Q932K9</accession>
<reference key="1">
    <citation type="journal article" date="2001" name="Lancet">
        <title>Whole genome sequencing of meticillin-resistant Staphylococcus aureus.</title>
        <authorList>
            <person name="Kuroda M."/>
            <person name="Ohta T."/>
            <person name="Uchiyama I."/>
            <person name="Baba T."/>
            <person name="Yuzawa H."/>
            <person name="Kobayashi I."/>
            <person name="Cui L."/>
            <person name="Oguchi A."/>
            <person name="Aoki K."/>
            <person name="Nagai Y."/>
            <person name="Lian J.-Q."/>
            <person name="Ito T."/>
            <person name="Kanamori M."/>
            <person name="Matsumaru H."/>
            <person name="Maruyama A."/>
            <person name="Murakami H."/>
            <person name="Hosoyama A."/>
            <person name="Mizutani-Ui Y."/>
            <person name="Takahashi N.K."/>
            <person name="Sawano T."/>
            <person name="Inoue R."/>
            <person name="Kaito C."/>
            <person name="Sekimizu K."/>
            <person name="Hirakawa H."/>
            <person name="Kuhara S."/>
            <person name="Goto S."/>
            <person name="Yabuzaki J."/>
            <person name="Kanehisa M."/>
            <person name="Yamashita A."/>
            <person name="Oshima K."/>
            <person name="Furuya K."/>
            <person name="Yoshino C."/>
            <person name="Shiba T."/>
            <person name="Hattori M."/>
            <person name="Ogasawara N."/>
            <person name="Hayashi H."/>
            <person name="Hiramatsu K."/>
        </authorList>
    </citation>
    <scope>NUCLEOTIDE SEQUENCE [LARGE SCALE GENOMIC DNA]</scope>
    <source>
        <strain>Mu50 / ATCC 700699</strain>
    </source>
</reference>
<sequence>MIEKSQACHDSLLDSVGQTPMVQLHQLFPKHEVFAKLEYMNPGGSMKDRPAKYIIEHGIKHGLITENTHLIESTSGNLGIALAMIAKIKGLKLTCVVDPKISPTNLKIIKSYGANVEMVEEPDAHGGYLMTRIAKVQELLATIDDAYWINQYANELNWQSHYHGAGTEIVETIKQPIDYFVAPVSTTGSIMGMSRKIKEVHPNAQIVAVDAKGSVIFGDKPINRELPGIGASRVPEILNRSEINQVIHVDDYQSALGCRKLIDYEGIFAGGSTGSIIAAIEQLITSIEEGATIVTILPDRGDRYLDLVYSDTWLEKMKSRQGVKSE</sequence>
<organism>
    <name type="scientific">Staphylococcus aureus (strain Mu50 / ATCC 700699)</name>
    <dbReference type="NCBI Taxonomy" id="158878"/>
    <lineage>
        <taxon>Bacteria</taxon>
        <taxon>Bacillati</taxon>
        <taxon>Bacillota</taxon>
        <taxon>Bacilli</taxon>
        <taxon>Bacillales</taxon>
        <taxon>Staphylococcaceae</taxon>
        <taxon>Staphylococcus</taxon>
    </lineage>
</organism>
<protein>
    <recommendedName>
        <fullName evidence="3">N-(2-amino-2-carboxyethyl)-L-glutamate synthase</fullName>
        <shortName evidence="3">ACEGA synthase</shortName>
        <ecNumber evidence="1">2.5.1.140</ecNumber>
    </recommendedName>
</protein>
<name>SBNA_STAAM</name>
<proteinExistence type="inferred from homology"/>
<evidence type="ECO:0000250" key="1">
    <source>
        <dbReference type="UniProtKB" id="A6QDA0"/>
    </source>
</evidence>
<evidence type="ECO:0000250" key="2">
    <source>
        <dbReference type="UniProtKB" id="Q2G1N3"/>
    </source>
</evidence>
<evidence type="ECO:0000305" key="3"/>
<gene>
    <name type="primary">sbnA</name>
    <name type="ordered locus">SAV0116</name>
</gene>
<comment type="function">
    <text evidence="1">Catalyzes the synthesis of N-((2S)-2-amino-2-carboxyethyl)-L-glutamate (ACEGA) from O-phospho-L-serine and L-glutamate. Involved in the biosynthesis of L-2,3-diaminopropionic acid (L-Dap), a precursor of staphyloferrin B and antibiotics.</text>
</comment>
<comment type="catalytic activity">
    <reaction evidence="1">
        <text>O-phospho-L-serine + L-glutamate = N-[(2S)-2-amino-2-carboxyethyl]-L-glutamate + phosphate + H(+)</text>
        <dbReference type="Rhea" id="RHEA:52384"/>
        <dbReference type="ChEBI" id="CHEBI:15378"/>
        <dbReference type="ChEBI" id="CHEBI:29985"/>
        <dbReference type="ChEBI" id="CHEBI:43474"/>
        <dbReference type="ChEBI" id="CHEBI:57524"/>
        <dbReference type="ChEBI" id="CHEBI:134610"/>
        <dbReference type="EC" id="2.5.1.140"/>
    </reaction>
</comment>
<comment type="cofactor">
    <cofactor evidence="1">
        <name>pyridoxal 5'-phosphate</name>
        <dbReference type="ChEBI" id="CHEBI:597326"/>
    </cofactor>
</comment>
<comment type="pathway">
    <text evidence="1">Siderophore biosynthesis.</text>
</comment>
<comment type="subunit">
    <text evidence="1">Homodimer.</text>
</comment>
<comment type="induction">
    <text evidence="2">Up-regulated under iron-deficient growth conditions. Repressed by Fur under iron-rich growth conditions.</text>
</comment>
<comment type="similarity">
    <text evidence="3">Belongs to the cysteine synthase/cystathionine beta-synthase family. SbnA subfamily.</text>
</comment>
<feature type="chain" id="PRO_0000395020" description="N-(2-amino-2-carboxyethyl)-L-glutamate synthase">
    <location>
        <begin position="1"/>
        <end position="326"/>
    </location>
</feature>
<feature type="binding site" evidence="1">
    <location>
        <position position="77"/>
    </location>
    <ligand>
        <name>pyridoxal 5'-phosphate</name>
        <dbReference type="ChEBI" id="CHEBI:597326"/>
    </ligand>
</feature>
<feature type="binding site" evidence="1">
    <location>
        <begin position="185"/>
        <end position="189"/>
    </location>
    <ligand>
        <name>pyridoxal 5'-phosphate</name>
        <dbReference type="ChEBI" id="CHEBI:597326"/>
    </ligand>
</feature>
<feature type="binding site" evidence="1">
    <location>
        <position position="272"/>
    </location>
    <ligand>
        <name>pyridoxal 5'-phosphate</name>
        <dbReference type="ChEBI" id="CHEBI:597326"/>
    </ligand>
</feature>
<feature type="modified residue" description="N6-(pyridoxal phosphate)lysine" evidence="1">
    <location>
        <position position="47"/>
    </location>
</feature>